<organism>
    <name type="scientific">Pelobacter propionicus (strain DSM 2379 / NBRC 103807 / OttBd1)</name>
    <dbReference type="NCBI Taxonomy" id="338966"/>
    <lineage>
        <taxon>Bacteria</taxon>
        <taxon>Pseudomonadati</taxon>
        <taxon>Thermodesulfobacteriota</taxon>
        <taxon>Desulfuromonadia</taxon>
        <taxon>Desulfuromonadales</taxon>
        <taxon>Desulfuromonadaceae</taxon>
        <taxon>Pelobacter</taxon>
    </lineage>
</organism>
<reference key="1">
    <citation type="submission" date="2006-10" db="EMBL/GenBank/DDBJ databases">
        <title>Complete sequence of chromosome of Pelobacter propionicus DSM 2379.</title>
        <authorList>
            <consortium name="US DOE Joint Genome Institute"/>
            <person name="Copeland A."/>
            <person name="Lucas S."/>
            <person name="Lapidus A."/>
            <person name="Barry K."/>
            <person name="Detter J.C."/>
            <person name="Glavina del Rio T."/>
            <person name="Hammon N."/>
            <person name="Israni S."/>
            <person name="Dalin E."/>
            <person name="Tice H."/>
            <person name="Pitluck S."/>
            <person name="Saunders E."/>
            <person name="Brettin T."/>
            <person name="Bruce D."/>
            <person name="Han C."/>
            <person name="Tapia R."/>
            <person name="Schmutz J."/>
            <person name="Larimer F."/>
            <person name="Land M."/>
            <person name="Hauser L."/>
            <person name="Kyrpides N."/>
            <person name="Kim E."/>
            <person name="Lovley D."/>
            <person name="Richardson P."/>
        </authorList>
    </citation>
    <scope>NUCLEOTIDE SEQUENCE [LARGE SCALE GENOMIC DNA]</scope>
    <source>
        <strain>DSM 2379 / NBRC 103807 / OttBd1</strain>
    </source>
</reference>
<dbReference type="EMBL" id="CP000482">
    <property type="protein sequence ID" value="ABK98592.1"/>
    <property type="molecule type" value="Genomic_DNA"/>
</dbReference>
<dbReference type="RefSeq" id="WP_011734899.1">
    <property type="nucleotide sequence ID" value="NC_008609.1"/>
</dbReference>
<dbReference type="SMR" id="A1AMM2"/>
<dbReference type="STRING" id="338966.Ppro_0964"/>
<dbReference type="KEGG" id="ppd:Ppro_0964"/>
<dbReference type="eggNOG" id="COG0858">
    <property type="taxonomic scope" value="Bacteria"/>
</dbReference>
<dbReference type="HOGENOM" id="CLU_089475_6_3_7"/>
<dbReference type="OrthoDB" id="307788at2"/>
<dbReference type="Proteomes" id="UP000006732">
    <property type="component" value="Chromosome"/>
</dbReference>
<dbReference type="GO" id="GO:0005829">
    <property type="term" value="C:cytosol"/>
    <property type="evidence" value="ECO:0007669"/>
    <property type="project" value="TreeGrafter"/>
</dbReference>
<dbReference type="GO" id="GO:0043024">
    <property type="term" value="F:ribosomal small subunit binding"/>
    <property type="evidence" value="ECO:0007669"/>
    <property type="project" value="TreeGrafter"/>
</dbReference>
<dbReference type="GO" id="GO:0030490">
    <property type="term" value="P:maturation of SSU-rRNA"/>
    <property type="evidence" value="ECO:0007669"/>
    <property type="project" value="UniProtKB-UniRule"/>
</dbReference>
<dbReference type="Gene3D" id="3.30.300.20">
    <property type="match status" value="1"/>
</dbReference>
<dbReference type="HAMAP" id="MF_00003">
    <property type="entry name" value="RbfA"/>
    <property type="match status" value="1"/>
</dbReference>
<dbReference type="InterPro" id="IPR015946">
    <property type="entry name" value="KH_dom-like_a/b"/>
</dbReference>
<dbReference type="InterPro" id="IPR000238">
    <property type="entry name" value="RbfA"/>
</dbReference>
<dbReference type="InterPro" id="IPR023799">
    <property type="entry name" value="RbfA_dom_sf"/>
</dbReference>
<dbReference type="InterPro" id="IPR020053">
    <property type="entry name" value="Ribosome-bd_factorA_CS"/>
</dbReference>
<dbReference type="NCBIfam" id="NF010388">
    <property type="entry name" value="PRK13815.1"/>
    <property type="match status" value="1"/>
</dbReference>
<dbReference type="NCBIfam" id="TIGR00082">
    <property type="entry name" value="rbfA"/>
    <property type="match status" value="1"/>
</dbReference>
<dbReference type="PANTHER" id="PTHR33515">
    <property type="entry name" value="RIBOSOME-BINDING FACTOR A, CHLOROPLASTIC-RELATED"/>
    <property type="match status" value="1"/>
</dbReference>
<dbReference type="PANTHER" id="PTHR33515:SF1">
    <property type="entry name" value="RIBOSOME-BINDING FACTOR A, CHLOROPLASTIC-RELATED"/>
    <property type="match status" value="1"/>
</dbReference>
<dbReference type="Pfam" id="PF02033">
    <property type="entry name" value="RBFA"/>
    <property type="match status" value="1"/>
</dbReference>
<dbReference type="SUPFAM" id="SSF89919">
    <property type="entry name" value="Ribosome-binding factor A, RbfA"/>
    <property type="match status" value="1"/>
</dbReference>
<dbReference type="PROSITE" id="PS01319">
    <property type="entry name" value="RBFA"/>
    <property type="match status" value="1"/>
</dbReference>
<evidence type="ECO:0000255" key="1">
    <source>
        <dbReference type="HAMAP-Rule" id="MF_00003"/>
    </source>
</evidence>
<sequence length="122" mass="13847">MSKRSEKLAETIHETISSILSRGLNDPRIGFVTLTAVDVVEDLSIARIYFTAIGDRDARKNSEAGLNSAKGYLRRELGKVLTIRHIPELIFKYDESQEYGNRIDSILREIATEHDRDDSEHS</sequence>
<feature type="chain" id="PRO_1000000161" description="Ribosome-binding factor A">
    <location>
        <begin position="1"/>
        <end position="122"/>
    </location>
</feature>
<accession>A1AMM2</accession>
<keyword id="KW-0963">Cytoplasm</keyword>
<keyword id="KW-1185">Reference proteome</keyword>
<keyword id="KW-0690">Ribosome biogenesis</keyword>
<proteinExistence type="inferred from homology"/>
<protein>
    <recommendedName>
        <fullName evidence="1">Ribosome-binding factor A</fullName>
    </recommendedName>
</protein>
<comment type="function">
    <text evidence="1">One of several proteins that assist in the late maturation steps of the functional core of the 30S ribosomal subunit. Associates with free 30S ribosomal subunits (but not with 30S subunits that are part of 70S ribosomes or polysomes). Required for efficient processing of 16S rRNA. May interact with the 5'-terminal helix region of 16S rRNA.</text>
</comment>
<comment type="subunit">
    <text evidence="1">Monomer. Binds 30S ribosomal subunits, but not 50S ribosomal subunits or 70S ribosomes.</text>
</comment>
<comment type="subcellular location">
    <subcellularLocation>
        <location evidence="1">Cytoplasm</location>
    </subcellularLocation>
</comment>
<comment type="similarity">
    <text evidence="1">Belongs to the RbfA family.</text>
</comment>
<name>RBFA_PELPD</name>
<gene>
    <name evidence="1" type="primary">rbfA</name>
    <name type="ordered locus">Ppro_0964</name>
</gene>